<accession>A7HDB7</accession>
<reference key="1">
    <citation type="journal article" date="2015" name="Genome Announc.">
        <title>Complete genome sequence of Anaeromyxobacter sp. Fw109-5, an anaerobic, metal-reducing bacterium isolated from a contaminated subsurface environment.</title>
        <authorList>
            <person name="Hwang C."/>
            <person name="Copeland A."/>
            <person name="Lucas S."/>
            <person name="Lapidus A."/>
            <person name="Barry K."/>
            <person name="Glavina Del Rio T."/>
            <person name="Dalin E."/>
            <person name="Tice H."/>
            <person name="Pitluck S."/>
            <person name="Sims D."/>
            <person name="Brettin T."/>
            <person name="Bruce D.C."/>
            <person name="Detter J.C."/>
            <person name="Han C.S."/>
            <person name="Schmutz J."/>
            <person name="Larimer F.W."/>
            <person name="Land M.L."/>
            <person name="Hauser L.J."/>
            <person name="Kyrpides N."/>
            <person name="Lykidis A."/>
            <person name="Richardson P."/>
            <person name="Belieav A."/>
            <person name="Sanford R.A."/>
            <person name="Loeffler F.E."/>
            <person name="Fields M.W."/>
        </authorList>
    </citation>
    <scope>NUCLEOTIDE SEQUENCE [LARGE SCALE GENOMIC DNA]</scope>
    <source>
        <strain>Fw109-5</strain>
    </source>
</reference>
<name>PUR5_ANADF</name>
<organism>
    <name type="scientific">Anaeromyxobacter sp. (strain Fw109-5)</name>
    <dbReference type="NCBI Taxonomy" id="404589"/>
    <lineage>
        <taxon>Bacteria</taxon>
        <taxon>Pseudomonadati</taxon>
        <taxon>Myxococcota</taxon>
        <taxon>Myxococcia</taxon>
        <taxon>Myxococcales</taxon>
        <taxon>Cystobacterineae</taxon>
        <taxon>Anaeromyxobacteraceae</taxon>
        <taxon>Anaeromyxobacter</taxon>
    </lineage>
</organism>
<protein>
    <recommendedName>
        <fullName evidence="1">Phosphoribosylformylglycinamidine cyclo-ligase</fullName>
        <ecNumber evidence="1">6.3.3.1</ecNumber>
    </recommendedName>
    <alternativeName>
        <fullName evidence="1">AIR synthase</fullName>
    </alternativeName>
    <alternativeName>
        <fullName evidence="1">AIRS</fullName>
    </alternativeName>
    <alternativeName>
        <fullName evidence="1">Phosphoribosyl-aminoimidazole synthetase</fullName>
    </alternativeName>
</protein>
<comment type="catalytic activity">
    <reaction evidence="1">
        <text>2-formamido-N(1)-(5-O-phospho-beta-D-ribosyl)acetamidine + ATP = 5-amino-1-(5-phospho-beta-D-ribosyl)imidazole + ADP + phosphate + H(+)</text>
        <dbReference type="Rhea" id="RHEA:23032"/>
        <dbReference type="ChEBI" id="CHEBI:15378"/>
        <dbReference type="ChEBI" id="CHEBI:30616"/>
        <dbReference type="ChEBI" id="CHEBI:43474"/>
        <dbReference type="ChEBI" id="CHEBI:137981"/>
        <dbReference type="ChEBI" id="CHEBI:147287"/>
        <dbReference type="ChEBI" id="CHEBI:456216"/>
        <dbReference type="EC" id="6.3.3.1"/>
    </reaction>
</comment>
<comment type="pathway">
    <text evidence="1">Purine metabolism; IMP biosynthesis via de novo pathway; 5-amino-1-(5-phospho-D-ribosyl)imidazole from N(2)-formyl-N(1)-(5-phospho-D-ribosyl)glycinamide: step 2/2.</text>
</comment>
<comment type="subcellular location">
    <subcellularLocation>
        <location evidence="1">Cytoplasm</location>
    </subcellularLocation>
</comment>
<comment type="similarity">
    <text evidence="1">Belongs to the AIR synthase family.</text>
</comment>
<sequence length="344" mass="36202">MSLTYRDAGVDIDEGDRLVELIKPHARPTLRPEVLAGIGGFGGLFALDVKKYREPVLVSGTDGVGTKLKVAFAANRHDTIGIDLVAMCVNDVAVVGAEPLFFLDYFGTGKLSAEQGAEVVKGIAEGCRQAGCALIGGETAELPGFYAPGEYDLAGFAVGCVERSRIVDGKGVAPGDVVVGVASTGLHSNGYSLARKALMDRHPLDRRFDGLGGRTLGEALLEPTRIYAKDVLALLDAVPVKAFSHITGGGLPGNVPRTLPDGTRAVLEEKRWPRPAIFDLVEREGGVPRDEMYRTFNMGLGLVAVVAPGDEAAAHAALRARGLDAWTVGQIEVGTGEATCEVVR</sequence>
<feature type="chain" id="PRO_1000046419" description="Phosphoribosylformylglycinamidine cyclo-ligase">
    <location>
        <begin position="1"/>
        <end position="344"/>
    </location>
</feature>
<proteinExistence type="inferred from homology"/>
<keyword id="KW-0067">ATP-binding</keyword>
<keyword id="KW-0963">Cytoplasm</keyword>
<keyword id="KW-0436">Ligase</keyword>
<keyword id="KW-0547">Nucleotide-binding</keyword>
<keyword id="KW-0658">Purine biosynthesis</keyword>
<keyword id="KW-1185">Reference proteome</keyword>
<dbReference type="EC" id="6.3.3.1" evidence="1"/>
<dbReference type="EMBL" id="CP000769">
    <property type="protein sequence ID" value="ABS26713.1"/>
    <property type="molecule type" value="Genomic_DNA"/>
</dbReference>
<dbReference type="RefSeq" id="WP_012097305.1">
    <property type="nucleotide sequence ID" value="NC_009675.1"/>
</dbReference>
<dbReference type="SMR" id="A7HDB7"/>
<dbReference type="STRING" id="404589.Anae109_2512"/>
<dbReference type="KEGG" id="afw:Anae109_2512"/>
<dbReference type="eggNOG" id="COG0150">
    <property type="taxonomic scope" value="Bacteria"/>
</dbReference>
<dbReference type="HOGENOM" id="CLU_047116_0_0_7"/>
<dbReference type="OrthoDB" id="9777881at2"/>
<dbReference type="UniPathway" id="UPA00074">
    <property type="reaction ID" value="UER00129"/>
</dbReference>
<dbReference type="Proteomes" id="UP000006382">
    <property type="component" value="Chromosome"/>
</dbReference>
<dbReference type="GO" id="GO:0005829">
    <property type="term" value="C:cytosol"/>
    <property type="evidence" value="ECO:0007669"/>
    <property type="project" value="TreeGrafter"/>
</dbReference>
<dbReference type="GO" id="GO:0005524">
    <property type="term" value="F:ATP binding"/>
    <property type="evidence" value="ECO:0007669"/>
    <property type="project" value="UniProtKB-KW"/>
</dbReference>
<dbReference type="GO" id="GO:0004637">
    <property type="term" value="F:phosphoribosylamine-glycine ligase activity"/>
    <property type="evidence" value="ECO:0007669"/>
    <property type="project" value="TreeGrafter"/>
</dbReference>
<dbReference type="GO" id="GO:0004641">
    <property type="term" value="F:phosphoribosylformylglycinamidine cyclo-ligase activity"/>
    <property type="evidence" value="ECO:0007669"/>
    <property type="project" value="UniProtKB-UniRule"/>
</dbReference>
<dbReference type="GO" id="GO:0006189">
    <property type="term" value="P:'de novo' IMP biosynthetic process"/>
    <property type="evidence" value="ECO:0007669"/>
    <property type="project" value="UniProtKB-UniRule"/>
</dbReference>
<dbReference type="GO" id="GO:0046084">
    <property type="term" value="P:adenine biosynthetic process"/>
    <property type="evidence" value="ECO:0007669"/>
    <property type="project" value="TreeGrafter"/>
</dbReference>
<dbReference type="CDD" id="cd02196">
    <property type="entry name" value="PurM"/>
    <property type="match status" value="1"/>
</dbReference>
<dbReference type="FunFam" id="3.30.1330.10:FF:000001">
    <property type="entry name" value="Phosphoribosylformylglycinamidine cyclo-ligase"/>
    <property type="match status" value="1"/>
</dbReference>
<dbReference type="FunFam" id="3.90.650.10:FF:000011">
    <property type="entry name" value="Phosphoribosylformylglycinamidine cyclo-ligase"/>
    <property type="match status" value="1"/>
</dbReference>
<dbReference type="Gene3D" id="3.90.650.10">
    <property type="entry name" value="PurM-like C-terminal domain"/>
    <property type="match status" value="1"/>
</dbReference>
<dbReference type="Gene3D" id="3.30.1330.10">
    <property type="entry name" value="PurM-like, N-terminal domain"/>
    <property type="match status" value="1"/>
</dbReference>
<dbReference type="HAMAP" id="MF_00741">
    <property type="entry name" value="AIRS"/>
    <property type="match status" value="1"/>
</dbReference>
<dbReference type="InterPro" id="IPR010918">
    <property type="entry name" value="PurM-like_C_dom"/>
</dbReference>
<dbReference type="InterPro" id="IPR036676">
    <property type="entry name" value="PurM-like_C_sf"/>
</dbReference>
<dbReference type="InterPro" id="IPR016188">
    <property type="entry name" value="PurM-like_N"/>
</dbReference>
<dbReference type="InterPro" id="IPR036921">
    <property type="entry name" value="PurM-like_N_sf"/>
</dbReference>
<dbReference type="InterPro" id="IPR004733">
    <property type="entry name" value="PurM_cligase"/>
</dbReference>
<dbReference type="NCBIfam" id="TIGR00878">
    <property type="entry name" value="purM"/>
    <property type="match status" value="1"/>
</dbReference>
<dbReference type="PANTHER" id="PTHR10520:SF12">
    <property type="entry name" value="TRIFUNCTIONAL PURINE BIOSYNTHETIC PROTEIN ADENOSINE-3"/>
    <property type="match status" value="1"/>
</dbReference>
<dbReference type="PANTHER" id="PTHR10520">
    <property type="entry name" value="TRIFUNCTIONAL PURINE BIOSYNTHETIC PROTEIN ADENOSINE-3-RELATED"/>
    <property type="match status" value="1"/>
</dbReference>
<dbReference type="Pfam" id="PF00586">
    <property type="entry name" value="AIRS"/>
    <property type="match status" value="1"/>
</dbReference>
<dbReference type="Pfam" id="PF02769">
    <property type="entry name" value="AIRS_C"/>
    <property type="match status" value="1"/>
</dbReference>
<dbReference type="SUPFAM" id="SSF56042">
    <property type="entry name" value="PurM C-terminal domain-like"/>
    <property type="match status" value="1"/>
</dbReference>
<dbReference type="SUPFAM" id="SSF55326">
    <property type="entry name" value="PurM N-terminal domain-like"/>
    <property type="match status" value="1"/>
</dbReference>
<gene>
    <name evidence="1" type="primary">purM</name>
    <name type="ordered locus">Anae109_2512</name>
</gene>
<evidence type="ECO:0000255" key="1">
    <source>
        <dbReference type="HAMAP-Rule" id="MF_00741"/>
    </source>
</evidence>